<gene>
    <name evidence="4" type="primary">SMR14</name>
    <name evidence="3" type="synonym">SMR13</name>
    <name evidence="6" type="ordered locus">At5g59360</name>
    <name evidence="7" type="ORF">F2O15.2</name>
</gene>
<accession>Q9LTJ2</accession>
<organism evidence="7">
    <name type="scientific">Arabidopsis thaliana</name>
    <name type="common">Mouse-ear cress</name>
    <dbReference type="NCBI Taxonomy" id="3702"/>
    <lineage>
        <taxon>Eukaryota</taxon>
        <taxon>Viridiplantae</taxon>
        <taxon>Streptophyta</taxon>
        <taxon>Embryophyta</taxon>
        <taxon>Tracheophyta</taxon>
        <taxon>Spermatophyta</taxon>
        <taxon>Magnoliopsida</taxon>
        <taxon>eudicotyledons</taxon>
        <taxon>Gunneridae</taxon>
        <taxon>Pentapetalae</taxon>
        <taxon>rosids</taxon>
        <taxon>malvids</taxon>
        <taxon>Brassicales</taxon>
        <taxon>Brassicaceae</taxon>
        <taxon>Camelineae</taxon>
        <taxon>Arabidopsis</taxon>
    </lineage>
</organism>
<name>SMR14_ARATH</name>
<keyword id="KW-0131">Cell cycle</keyword>
<keyword id="KW-0649">Protein kinase inhibitor</keyword>
<keyword id="KW-1185">Reference proteome</keyword>
<comment type="function">
    <text evidence="1">Probable cyclin-dependent protein kinase (CDK) inhibitor that functions as a repressor of mitosis in the endoreduplication cell cycle.</text>
</comment>
<comment type="caution">
    <text evidence="5">This gene was called SMR13 in PubMed:24399300.</text>
</comment>
<sequence>MSKIKIFHLFPDDKDIEATQQPESLLVPSKSDSLDSSLSRHHQENQSNRQRNHQHRQQDQELENLQDGSRGKRKWECKDEESPVKIPETPRNSNSVCYCPPRPPRKPKAIPSMKRRGMWVKRSVVFLDVAREVESMFPPSVLQDFGKKIKKARF</sequence>
<feature type="chain" id="PRO_0000438473" description="Cyclin-dependent protein kinase inhibitor SMR14">
    <location>
        <begin position="1"/>
        <end position="154"/>
    </location>
</feature>
<feature type="region of interest" description="Disordered" evidence="2">
    <location>
        <begin position="1"/>
        <end position="111"/>
    </location>
</feature>
<feature type="compositionally biased region" description="Low complexity" evidence="2">
    <location>
        <begin position="24"/>
        <end position="37"/>
    </location>
</feature>
<feature type="compositionally biased region" description="Basic and acidic residues" evidence="2">
    <location>
        <begin position="74"/>
        <end position="83"/>
    </location>
</feature>
<evidence type="ECO:0000250" key="1">
    <source>
        <dbReference type="UniProtKB" id="Q9LZ78"/>
    </source>
</evidence>
<evidence type="ECO:0000256" key="2">
    <source>
        <dbReference type="SAM" id="MobiDB-lite"/>
    </source>
</evidence>
<evidence type="ECO:0000303" key="3">
    <source>
    </source>
</evidence>
<evidence type="ECO:0000303" key="4">
    <source>
    </source>
</evidence>
<evidence type="ECO:0000305" key="5"/>
<evidence type="ECO:0000312" key="6">
    <source>
        <dbReference type="Araport" id="AT5G59360"/>
    </source>
</evidence>
<evidence type="ECO:0000312" key="7">
    <source>
        <dbReference type="EMBL" id="BAA97472.1"/>
    </source>
</evidence>
<proteinExistence type="evidence at transcript level"/>
<protein>
    <recommendedName>
        <fullName evidence="4">Cyclin-dependent protein kinase inhibitor SMR14</fullName>
    </recommendedName>
    <alternativeName>
        <fullName evidence="3">Cyclin-dependent protein kinase inhibitor SMR13</fullName>
    </alternativeName>
    <alternativeName>
        <fullName evidence="3">Protein SIAMESE-RELATED 13</fullName>
    </alternativeName>
    <alternativeName>
        <fullName evidence="4">Protein SIAMESE-RELATED 14</fullName>
    </alternativeName>
</protein>
<dbReference type="EMBL" id="AB025604">
    <property type="protein sequence ID" value="BAA97472.1"/>
    <property type="molecule type" value="Genomic_DNA"/>
</dbReference>
<dbReference type="EMBL" id="CP002688">
    <property type="protein sequence ID" value="AED97175.1"/>
    <property type="molecule type" value="Genomic_DNA"/>
</dbReference>
<dbReference type="EMBL" id="AY954877">
    <property type="protein sequence ID" value="AAX55203.1"/>
    <property type="molecule type" value="Genomic_DNA"/>
</dbReference>
<dbReference type="EMBL" id="DQ132758">
    <property type="protein sequence ID" value="AAZ52788.1"/>
    <property type="molecule type" value="mRNA"/>
</dbReference>
<dbReference type="RefSeq" id="NP_200744.1">
    <property type="nucleotide sequence ID" value="NM_125327.3"/>
</dbReference>
<dbReference type="FunCoup" id="Q9LTJ2">
    <property type="interactions" value="1"/>
</dbReference>
<dbReference type="PaxDb" id="3702-AT5G59360.1"/>
<dbReference type="EnsemblPlants" id="AT5G59360.1">
    <property type="protein sequence ID" value="AT5G59360.1"/>
    <property type="gene ID" value="AT5G59360"/>
</dbReference>
<dbReference type="GeneID" id="836055"/>
<dbReference type="Gramene" id="AT5G59360.1">
    <property type="protein sequence ID" value="AT5G59360.1"/>
    <property type="gene ID" value="AT5G59360"/>
</dbReference>
<dbReference type="KEGG" id="ath:AT5G59360"/>
<dbReference type="Araport" id="AT5G59360"/>
<dbReference type="TAIR" id="AT5G59360">
    <property type="gene designation" value="SMR113"/>
</dbReference>
<dbReference type="eggNOG" id="ENOG502SY5E">
    <property type="taxonomic scope" value="Eukaryota"/>
</dbReference>
<dbReference type="HOGENOM" id="CLU_1715743_0_0_1"/>
<dbReference type="InParanoid" id="Q9LTJ2"/>
<dbReference type="OMA" id="KRKWECE"/>
<dbReference type="PRO" id="PR:Q9LTJ2"/>
<dbReference type="Proteomes" id="UP000006548">
    <property type="component" value="Chromosome 5"/>
</dbReference>
<dbReference type="ExpressionAtlas" id="Q9LTJ2">
    <property type="expression patterns" value="baseline and differential"/>
</dbReference>
<dbReference type="GO" id="GO:0004860">
    <property type="term" value="F:protein kinase inhibitor activity"/>
    <property type="evidence" value="ECO:0007669"/>
    <property type="project" value="UniProtKB-KW"/>
</dbReference>
<reference key="1">
    <citation type="submission" date="1999-04" db="EMBL/GenBank/DDBJ databases">
        <title>Structural analysis of Arabidopsis thaliana chromosome 5. XI.</title>
        <authorList>
            <person name="Kaneko T."/>
            <person name="Katoh T."/>
            <person name="Asamizu E."/>
            <person name="Sato S."/>
            <person name="Nakamura Y."/>
            <person name="Kotani H."/>
            <person name="Tabata S."/>
        </authorList>
    </citation>
    <scope>NUCLEOTIDE SEQUENCE [LARGE SCALE GENOMIC DNA]</scope>
    <source>
        <strain>cv. Columbia</strain>
    </source>
</reference>
<reference key="2">
    <citation type="journal article" date="2017" name="Plant J.">
        <title>Araport11: a complete reannotation of the Arabidopsis thaliana reference genome.</title>
        <authorList>
            <person name="Cheng C.Y."/>
            <person name="Krishnakumar V."/>
            <person name="Chan A.P."/>
            <person name="Thibaud-Nissen F."/>
            <person name="Schobel S."/>
            <person name="Town C.D."/>
        </authorList>
    </citation>
    <scope>GENOME REANNOTATION</scope>
    <source>
        <strain>cv. Columbia</strain>
    </source>
</reference>
<reference key="3">
    <citation type="submission" date="2005-03" db="EMBL/GenBank/DDBJ databases">
        <authorList>
            <person name="Underwood B.A."/>
            <person name="Xiao Y.-L."/>
            <person name="Moskal W.A. Jr."/>
            <person name="Monaghan E.L."/>
            <person name="Wang W."/>
            <person name="Redman J.C."/>
            <person name="Wu H.C."/>
            <person name="Utterback T."/>
            <person name="Town C.D."/>
        </authorList>
    </citation>
    <scope>NUCLEOTIDE SEQUENCE [LARGE SCALE GENOMIC DNA / MRNA]</scope>
    <source>
        <strain>cv. Columbia</strain>
    </source>
</reference>
<reference key="4">
    <citation type="journal article" date="2014" name="Plant Cell">
        <title>The Arabidopsis SIAMESE-RELATED cyclin-dependent kinase inhibitors SMR5 and SMR7 regulate the DNA damage checkpoint in response to reactive oxygen species.</title>
        <authorList>
            <person name="Yi D."/>
            <person name="Alvim Kamei C.L."/>
            <person name="Cools T."/>
            <person name="Vanderauwera S."/>
            <person name="Takahashi N."/>
            <person name="Okushima Y."/>
            <person name="Eekhout T."/>
            <person name="Yoshiyama K.O."/>
            <person name="Larkin J."/>
            <person name="Van den Daele H."/>
            <person name="Conklin P."/>
            <person name="Britt A."/>
            <person name="Umeda M."/>
            <person name="De Veylder L."/>
        </authorList>
    </citation>
    <scope>GENE FAMILY</scope>
    <scope>NOMENCLATURE</scope>
</reference>
<reference key="5">
    <citation type="journal article" date="2015" name="Plant Cell">
        <title>Functional conservation in the SIAMESE-RELATED family of cyclin-dependent kinase inhibitors in land plants.</title>
        <authorList>
            <person name="Kumar N."/>
            <person name="Harashima H."/>
            <person name="Kalve S."/>
            <person name="Bramsiepe J."/>
            <person name="Wang K."/>
            <person name="Sizani B.L."/>
            <person name="Bertrand L.L."/>
            <person name="Johnson M.C."/>
            <person name="Faulk C."/>
            <person name="Dale R."/>
            <person name="Simmons L.A."/>
            <person name="Churchman M.L."/>
            <person name="Sugimoto K."/>
            <person name="Kato N."/>
            <person name="Dasanayake M."/>
            <person name="Beemster G."/>
            <person name="Schnittger A."/>
            <person name="Larkin J.C."/>
        </authorList>
    </citation>
    <scope>GENE FAMILY</scope>
    <scope>NOMENCLATURE</scope>
</reference>